<name>OBE3_ARATH</name>
<keyword id="KW-0175">Coiled coil</keyword>
<keyword id="KW-0479">Metal-binding</keyword>
<keyword id="KW-0539">Nucleus</keyword>
<keyword id="KW-1185">Reference proteome</keyword>
<keyword id="KW-0804">Transcription</keyword>
<keyword id="KW-0805">Transcription regulation</keyword>
<keyword id="KW-0862">Zinc</keyword>
<keyword id="KW-0863">Zinc-finger</keyword>
<organism>
    <name type="scientific">Arabidopsis thaliana</name>
    <name type="common">Mouse-ear cress</name>
    <dbReference type="NCBI Taxonomy" id="3702"/>
    <lineage>
        <taxon>Eukaryota</taxon>
        <taxon>Viridiplantae</taxon>
        <taxon>Streptophyta</taxon>
        <taxon>Embryophyta</taxon>
        <taxon>Tracheophyta</taxon>
        <taxon>Spermatophyta</taxon>
        <taxon>Magnoliopsida</taxon>
        <taxon>eudicotyledons</taxon>
        <taxon>Gunneridae</taxon>
        <taxon>Pentapetalae</taxon>
        <taxon>rosids</taxon>
        <taxon>malvids</taxon>
        <taxon>Brassicales</taxon>
        <taxon>Brassicaceae</taxon>
        <taxon>Camelineae</taxon>
        <taxon>Arabidopsis</taxon>
    </lineage>
</organism>
<reference key="1">
    <citation type="journal article" date="2000" name="Nature">
        <title>Sequence and analysis of chromosome 1 of the plant Arabidopsis thaliana.</title>
        <authorList>
            <person name="Theologis A."/>
            <person name="Ecker J.R."/>
            <person name="Palm C.J."/>
            <person name="Federspiel N.A."/>
            <person name="Kaul S."/>
            <person name="White O."/>
            <person name="Alonso J."/>
            <person name="Altafi H."/>
            <person name="Araujo R."/>
            <person name="Bowman C.L."/>
            <person name="Brooks S.Y."/>
            <person name="Buehler E."/>
            <person name="Chan A."/>
            <person name="Chao Q."/>
            <person name="Chen H."/>
            <person name="Cheuk R.F."/>
            <person name="Chin C.W."/>
            <person name="Chung M.K."/>
            <person name="Conn L."/>
            <person name="Conway A.B."/>
            <person name="Conway A.R."/>
            <person name="Creasy T.H."/>
            <person name="Dewar K."/>
            <person name="Dunn P."/>
            <person name="Etgu P."/>
            <person name="Feldblyum T.V."/>
            <person name="Feng J.-D."/>
            <person name="Fong B."/>
            <person name="Fujii C.Y."/>
            <person name="Gill J.E."/>
            <person name="Goldsmith A.D."/>
            <person name="Haas B."/>
            <person name="Hansen N.F."/>
            <person name="Hughes B."/>
            <person name="Huizar L."/>
            <person name="Hunter J.L."/>
            <person name="Jenkins J."/>
            <person name="Johnson-Hopson C."/>
            <person name="Khan S."/>
            <person name="Khaykin E."/>
            <person name="Kim C.J."/>
            <person name="Koo H.L."/>
            <person name="Kremenetskaia I."/>
            <person name="Kurtz D.B."/>
            <person name="Kwan A."/>
            <person name="Lam B."/>
            <person name="Langin-Hooper S."/>
            <person name="Lee A."/>
            <person name="Lee J.M."/>
            <person name="Lenz C.A."/>
            <person name="Li J.H."/>
            <person name="Li Y.-P."/>
            <person name="Lin X."/>
            <person name="Liu S.X."/>
            <person name="Liu Z.A."/>
            <person name="Luros J.S."/>
            <person name="Maiti R."/>
            <person name="Marziali A."/>
            <person name="Militscher J."/>
            <person name="Miranda M."/>
            <person name="Nguyen M."/>
            <person name="Nierman W.C."/>
            <person name="Osborne B.I."/>
            <person name="Pai G."/>
            <person name="Peterson J."/>
            <person name="Pham P.K."/>
            <person name="Rizzo M."/>
            <person name="Rooney T."/>
            <person name="Rowley D."/>
            <person name="Sakano H."/>
            <person name="Salzberg S.L."/>
            <person name="Schwartz J.R."/>
            <person name="Shinn P."/>
            <person name="Southwick A.M."/>
            <person name="Sun H."/>
            <person name="Tallon L.J."/>
            <person name="Tambunga G."/>
            <person name="Toriumi M.J."/>
            <person name="Town C.D."/>
            <person name="Utterback T."/>
            <person name="Van Aken S."/>
            <person name="Vaysberg M."/>
            <person name="Vysotskaia V.S."/>
            <person name="Walker M."/>
            <person name="Wu D."/>
            <person name="Yu G."/>
            <person name="Fraser C.M."/>
            <person name="Venter J.C."/>
            <person name="Davis R.W."/>
        </authorList>
    </citation>
    <scope>NUCLEOTIDE SEQUENCE [LARGE SCALE GENOMIC DNA]</scope>
    <source>
        <strain>cv. Columbia</strain>
    </source>
</reference>
<reference key="2">
    <citation type="journal article" date="2017" name="Plant J.">
        <title>Araport11: a complete reannotation of the Arabidopsis thaliana reference genome.</title>
        <authorList>
            <person name="Cheng C.Y."/>
            <person name="Krishnakumar V."/>
            <person name="Chan A.P."/>
            <person name="Thibaud-Nissen F."/>
            <person name="Schobel S."/>
            <person name="Town C.D."/>
        </authorList>
    </citation>
    <scope>GENOME REANNOTATION</scope>
    <source>
        <strain>cv. Columbia</strain>
    </source>
</reference>
<reference key="3">
    <citation type="journal article" date="2003" name="Science">
        <title>Empirical analysis of transcriptional activity in the Arabidopsis genome.</title>
        <authorList>
            <person name="Yamada K."/>
            <person name="Lim J."/>
            <person name="Dale J.M."/>
            <person name="Chen H."/>
            <person name="Shinn P."/>
            <person name="Palm C.J."/>
            <person name="Southwick A.M."/>
            <person name="Wu H.C."/>
            <person name="Kim C.J."/>
            <person name="Nguyen M."/>
            <person name="Pham P.K."/>
            <person name="Cheuk R.F."/>
            <person name="Karlin-Newmann G."/>
            <person name="Liu S.X."/>
            <person name="Lam B."/>
            <person name="Sakano H."/>
            <person name="Wu T."/>
            <person name="Yu G."/>
            <person name="Miranda M."/>
            <person name="Quach H.L."/>
            <person name="Tripp M."/>
            <person name="Chang C.H."/>
            <person name="Lee J.M."/>
            <person name="Toriumi M.J."/>
            <person name="Chan M.M."/>
            <person name="Tang C.C."/>
            <person name="Onodera C.S."/>
            <person name="Deng J.M."/>
            <person name="Akiyama K."/>
            <person name="Ansari Y."/>
            <person name="Arakawa T."/>
            <person name="Banh J."/>
            <person name="Banno F."/>
            <person name="Bowser L."/>
            <person name="Brooks S.Y."/>
            <person name="Carninci P."/>
            <person name="Chao Q."/>
            <person name="Choy N."/>
            <person name="Enju A."/>
            <person name="Goldsmith A.D."/>
            <person name="Gurjal M."/>
            <person name="Hansen N.F."/>
            <person name="Hayashizaki Y."/>
            <person name="Johnson-Hopson C."/>
            <person name="Hsuan V.W."/>
            <person name="Iida K."/>
            <person name="Karnes M."/>
            <person name="Khan S."/>
            <person name="Koesema E."/>
            <person name="Ishida J."/>
            <person name="Jiang P.X."/>
            <person name="Jones T."/>
            <person name="Kawai J."/>
            <person name="Kamiya A."/>
            <person name="Meyers C."/>
            <person name="Nakajima M."/>
            <person name="Narusaka M."/>
            <person name="Seki M."/>
            <person name="Sakurai T."/>
            <person name="Satou M."/>
            <person name="Tamse R."/>
            <person name="Vaysberg M."/>
            <person name="Wallender E.K."/>
            <person name="Wong C."/>
            <person name="Yamamura Y."/>
            <person name="Yuan S."/>
            <person name="Shinozaki K."/>
            <person name="Davis R.W."/>
            <person name="Theologis A."/>
            <person name="Ecker J.R."/>
        </authorList>
    </citation>
    <scope>NUCLEOTIDE SEQUENCE [LARGE SCALE MRNA]</scope>
    <source>
        <strain>cv. Columbia</strain>
    </source>
</reference>
<reference key="4">
    <citation type="journal article" date="2009" name="Plant J.">
        <title>Arabidopsis plant homeodomain finger proteins operate downstream of auxin accumulation in specifying the vasculature and primary root meristem.</title>
        <authorList>
            <person name="Thomas C.L."/>
            <person name="Schmidt D."/>
            <person name="Bayer E.M."/>
            <person name="Dreos R."/>
            <person name="Maule A.J."/>
        </authorList>
    </citation>
    <scope>INTERACTION WITH OBE1 AND OBE2</scope>
</reference>
<reference key="5">
    <citation type="journal article" date="2012" name="Development">
        <title>Control of embryonic meristem initiation in Arabidopsis by PHD-finger protein complexes.</title>
        <authorList>
            <person name="Saiga S."/>
            <person name="Moeller B."/>
            <person name="Watanabe-Taneda A."/>
            <person name="Abe M."/>
            <person name="Weijers D."/>
            <person name="Komeda Y."/>
        </authorList>
    </citation>
    <scope>FUNCTION</scope>
    <scope>INTERACTION WITH OBE1; OBE2 AND OBE4</scope>
    <scope>DEVELOPMENTAL STAGE</scope>
    <scope>DISRUPTION PHENOTYPE</scope>
</reference>
<reference key="6">
    <citation type="journal article" date="2016" name="PLoS ONE">
        <title>OBE3 and WUS interaction in shoot meristem stem cell regulation.</title>
        <authorList>
            <person name="Lin T.F."/>
            <person name="Saiga S."/>
            <person name="Abe M."/>
            <person name="Laux T."/>
        </authorList>
    </citation>
    <scope>FUNCTION</scope>
    <scope>DISRUPTION PHENOTYPE</scope>
</reference>
<sequence>MIGEKDLAGDGECSRTKTSKPRFSNLNNQTHQDDKTGQYHQKGVDFLNVRSNNLDGGFSSKSSPRSGNELTLSYLCENSGKLAESLGQKGKEVVTFSENSSYDDKWVERDFFNLREMNPNSSKRKAHEEEEEAEEEEDKKSNKIETLNLSLALPDVSLSLTASNAVKRPRVVTSERTTTSFSNDFTATAPSMSYSYSHPFSHNISCSMTRNSTDFDCSVGKDDHIWCAGEGTNGSVHSRFRPIGDGGVALANNPVSGKPSSSADYSFFPSELPARPGNEVTISGDSRKKVANLEDNDAVRSERVLYDIVSKSISSVALIIQGMADETLESAKEYLRNLIDSPEKKEKLVNLQNQIDKRSDLSKETLSKCVKDQLDILVAVRTGLKYFLSGKIRIPMNELVEIFLFLRCRNVNCKSLLPVDDCECKICSNNKGFCSSCMCPVCLRFDSASNTCSWVGCDVCSHWCHAACGIQKNLIKPGHSLKGQRGTTEMMFHCIGCAHKSEMFGFVKDVFVCCAKNWGLETLIKELDCVRKVFRGSDDAKGKALHLKANEMVKKLESKQISPLDASNFIIQFFNYAESIPEIPDPPRELTVAAETSYRKDEASVTPSTSKDQKKKSFALTDAMMNSFDSLESMVRIKEAETRMFQKKADEARIEAESFKRMIEMKTEKMEEEYTEKLARLCLQETEERRRNKLEELKKLENSHCDYRNMKLRMEAEIAGLLKRMEVTRQQLV</sequence>
<accession>Q94B71</accession>
<accession>Q9LQV7</accession>
<feature type="chain" id="PRO_0000399748" description="Protein OBERON 3">
    <location>
        <begin position="1"/>
        <end position="733"/>
    </location>
</feature>
<feature type="zinc finger region" description="PHD-type">
    <location>
        <begin position="436"/>
        <end position="500"/>
    </location>
</feature>
<feature type="region of interest" description="Disordered" evidence="3">
    <location>
        <begin position="1"/>
        <end position="42"/>
    </location>
</feature>
<feature type="region of interest" description="Disordered" evidence="3">
    <location>
        <begin position="118"/>
        <end position="142"/>
    </location>
</feature>
<feature type="region of interest" description="Disordered" evidence="3">
    <location>
        <begin position="592"/>
        <end position="614"/>
    </location>
</feature>
<feature type="coiled-coil region" evidence="2">
    <location>
        <begin position="120"/>
        <end position="153"/>
    </location>
</feature>
<feature type="coiled-coil region" evidence="2">
    <location>
        <begin position="644"/>
        <end position="733"/>
    </location>
</feature>
<feature type="compositionally biased region" description="Basic and acidic residues" evidence="3">
    <location>
        <begin position="1"/>
        <end position="15"/>
    </location>
</feature>
<feature type="compositionally biased region" description="Polar residues" evidence="3">
    <location>
        <begin position="21"/>
        <end position="30"/>
    </location>
</feature>
<proteinExistence type="evidence at protein level"/>
<gene>
    <name evidence="8" type="primary">OBE3</name>
    <name evidence="8" type="synonym">WEN9</name>
    <name evidence="10" type="ordered locus">At1g14740</name>
    <name evidence="11" type="ORF">F10B6.14</name>
</gene>
<comment type="function">
    <text evidence="5 6">Probable transcription factor that functions redundantly with OBE4 in specification of the hypophysis and establishment of the embryonic root (PubMed:22378640). Involved in the activation of ARF5/MP-dependent gene expression during embryonic root meristem initiation (PubMed:22378640). Involved in shoot meristem homeostasis (PubMed:27196372).</text>
</comment>
<comment type="subunit">
    <text evidence="4 5">Self-interacts (PubMed:22378640). Interacts with OBE1 and OBE2 (PubMed:19392692, PubMed:22378640). Interacts with OBE4 (PubMed:22378640).</text>
</comment>
<comment type="subcellular location">
    <subcellularLocation>
        <location evidence="1">Nucleus</location>
    </subcellularLocation>
</comment>
<comment type="developmental stage">
    <text evidence="5">Expressed in the two-cell stage embryo (PubMed:22378640). At early globular embryo stage, expressed both in the basal region of embryo proper and suspensor cells (PubMed:22378640). At heart and torpedo embryo stages expressed in the basal region apical regions of the embryo proper (PubMed:22378640).</text>
</comment>
<comment type="disruption phenotype">
    <text evidence="5 6">No visible phenotype under normal growth conditions, but the double mutants tta1 and tta2 exhibit a rootless phenotype and seedling lethality (PubMed:22378640). No visible phenotype under normal growth conditions, but the double mutants obe3-2 and obe4-2 exhibit broad growth defects and developmental arrest of seedlings (PubMed:27196372).</text>
</comment>
<comment type="sequence caution" evidence="9">
    <conflict type="erroneous gene model prediction">
        <sequence resource="EMBL-CDS" id="AAF79245"/>
    </conflict>
</comment>
<protein>
    <recommendedName>
        <fullName evidence="9">Protein OBERON 3</fullName>
    </recommendedName>
    <alternativeName>
        <fullName evidence="7">Protein TITANIA 1</fullName>
    </alternativeName>
    <alternativeName>
        <fullName evidence="8">Protein WUS ENHANCER 9</fullName>
    </alternativeName>
</protein>
<dbReference type="EMBL" id="AC006917">
    <property type="protein sequence ID" value="AAF79245.1"/>
    <property type="status" value="ALT_SEQ"/>
    <property type="molecule type" value="Genomic_DNA"/>
</dbReference>
<dbReference type="EMBL" id="CP002684">
    <property type="protein sequence ID" value="AEE29216.1"/>
    <property type="molecule type" value="Genomic_DNA"/>
</dbReference>
<dbReference type="EMBL" id="AY042810">
    <property type="protein sequence ID" value="AAK68750.1"/>
    <property type="molecule type" value="mRNA"/>
</dbReference>
<dbReference type="EMBL" id="AY081688">
    <property type="protein sequence ID" value="AAM10250.1"/>
    <property type="molecule type" value="mRNA"/>
</dbReference>
<dbReference type="PIR" id="F86281">
    <property type="entry name" value="F86281"/>
</dbReference>
<dbReference type="RefSeq" id="NP_563958.1">
    <property type="nucleotide sequence ID" value="NM_101343.2"/>
</dbReference>
<dbReference type="SMR" id="Q94B71"/>
<dbReference type="BioGRID" id="23279">
    <property type="interactions" value="5"/>
</dbReference>
<dbReference type="FunCoup" id="Q94B71">
    <property type="interactions" value="1948"/>
</dbReference>
<dbReference type="IntAct" id="Q94B71">
    <property type="interactions" value="2"/>
</dbReference>
<dbReference type="STRING" id="3702.Q94B71"/>
<dbReference type="iPTMnet" id="Q94B71"/>
<dbReference type="PaxDb" id="3702-AT1G14740.1"/>
<dbReference type="ProteomicsDB" id="250853"/>
<dbReference type="EnsemblPlants" id="AT1G14740.1">
    <property type="protein sequence ID" value="AT1G14740.1"/>
    <property type="gene ID" value="AT1G14740"/>
</dbReference>
<dbReference type="GeneID" id="838039"/>
<dbReference type="Gramene" id="AT1G14740.1">
    <property type="protein sequence ID" value="AT1G14740.1"/>
    <property type="gene ID" value="AT1G14740"/>
</dbReference>
<dbReference type="KEGG" id="ath:AT1G14740"/>
<dbReference type="Araport" id="AT1G14740"/>
<dbReference type="TAIR" id="AT1G14740">
    <property type="gene designation" value="TTA1"/>
</dbReference>
<dbReference type="eggNOG" id="ENOG502QPTA">
    <property type="taxonomic scope" value="Eukaryota"/>
</dbReference>
<dbReference type="HOGENOM" id="CLU_006737_3_0_1"/>
<dbReference type="InParanoid" id="Q94B71"/>
<dbReference type="OMA" id="CAKNWGL"/>
<dbReference type="OrthoDB" id="1905265at2759"/>
<dbReference type="PhylomeDB" id="Q94B71"/>
<dbReference type="PRO" id="PR:Q94B71"/>
<dbReference type="Proteomes" id="UP000006548">
    <property type="component" value="Chromosome 1"/>
</dbReference>
<dbReference type="ExpressionAtlas" id="Q94B71">
    <property type="expression patterns" value="baseline and differential"/>
</dbReference>
<dbReference type="GO" id="GO:0005634">
    <property type="term" value="C:nucleus"/>
    <property type="evidence" value="ECO:0007669"/>
    <property type="project" value="UniProtKB-SubCell"/>
</dbReference>
<dbReference type="GO" id="GO:0008270">
    <property type="term" value="F:zinc ion binding"/>
    <property type="evidence" value="ECO:0007669"/>
    <property type="project" value="UniProtKB-KW"/>
</dbReference>
<dbReference type="GO" id="GO:0001708">
    <property type="term" value="P:cell fate specification"/>
    <property type="evidence" value="ECO:0000316"/>
    <property type="project" value="TAIR"/>
</dbReference>
<dbReference type="GO" id="GO:0090421">
    <property type="term" value="P:embryonic meristem initiation"/>
    <property type="evidence" value="ECO:0000316"/>
    <property type="project" value="TAIR"/>
</dbReference>
<dbReference type="GO" id="GO:0009880">
    <property type="term" value="P:embryonic pattern specification"/>
    <property type="evidence" value="ECO:0000316"/>
    <property type="project" value="TAIR"/>
</dbReference>
<dbReference type="GO" id="GO:0098659">
    <property type="term" value="P:inorganic cation import across plasma membrane"/>
    <property type="evidence" value="ECO:0007669"/>
    <property type="project" value="EnsemblPlants"/>
</dbReference>
<dbReference type="CDD" id="cd15612">
    <property type="entry name" value="PHD_OBE1_like"/>
    <property type="match status" value="1"/>
</dbReference>
<dbReference type="InterPro" id="IPR047578">
    <property type="entry name" value="OBE1-like_PHD"/>
</dbReference>
<dbReference type="InterPro" id="IPR004082">
    <property type="entry name" value="OBERON"/>
</dbReference>
<dbReference type="InterPro" id="IPR032881">
    <property type="entry name" value="Oberon-like_PHD"/>
</dbReference>
<dbReference type="InterPro" id="IPR032535">
    <property type="entry name" value="Oberon_cc"/>
</dbReference>
<dbReference type="PANTHER" id="PTHR21736:SF38">
    <property type="entry name" value="PROTEIN OBERON 3"/>
    <property type="match status" value="1"/>
</dbReference>
<dbReference type="PANTHER" id="PTHR21736">
    <property type="entry name" value="VERNALIZATION-INSENSITIVE PROTEIN 3"/>
    <property type="match status" value="1"/>
</dbReference>
<dbReference type="Pfam" id="PF16312">
    <property type="entry name" value="Oberon_cc"/>
    <property type="match status" value="1"/>
</dbReference>
<dbReference type="Pfam" id="PF07227">
    <property type="entry name" value="PHD_Oberon"/>
    <property type="match status" value="1"/>
</dbReference>
<dbReference type="PRINTS" id="PR01544">
    <property type="entry name" value="ARATH130DUF"/>
</dbReference>
<evidence type="ECO:0000250" key="1">
    <source>
        <dbReference type="UniProtKB" id="Q9S736"/>
    </source>
</evidence>
<evidence type="ECO:0000255" key="2"/>
<evidence type="ECO:0000256" key="3">
    <source>
        <dbReference type="SAM" id="MobiDB-lite"/>
    </source>
</evidence>
<evidence type="ECO:0000269" key="4">
    <source>
    </source>
</evidence>
<evidence type="ECO:0000269" key="5">
    <source>
    </source>
</evidence>
<evidence type="ECO:0000269" key="6">
    <source>
    </source>
</evidence>
<evidence type="ECO:0000303" key="7">
    <source>
    </source>
</evidence>
<evidence type="ECO:0000303" key="8">
    <source>
    </source>
</evidence>
<evidence type="ECO:0000305" key="9"/>
<evidence type="ECO:0000312" key="10">
    <source>
        <dbReference type="Araport" id="AT1G14740"/>
    </source>
</evidence>
<evidence type="ECO:0000312" key="11">
    <source>
        <dbReference type="EMBL" id="AAF79245.1"/>
    </source>
</evidence>